<evidence type="ECO:0000255" key="1">
    <source>
        <dbReference type="HAMAP-Rule" id="MF_01610"/>
    </source>
</evidence>
<keyword id="KW-0210">Decarboxylase</keyword>
<keyword id="KW-0456">Lyase</keyword>
<keyword id="KW-0663">Pyridoxal phosphate</keyword>
<keyword id="KW-1185">Reference proteome</keyword>
<proteinExistence type="inferred from homology"/>
<organism>
    <name type="scientific">Methanocorpusculum labreanum (strain ATCC 43576 / DSM 4855 / Z)</name>
    <dbReference type="NCBI Taxonomy" id="410358"/>
    <lineage>
        <taxon>Archaea</taxon>
        <taxon>Methanobacteriati</taxon>
        <taxon>Methanobacteriota</taxon>
        <taxon>Stenosarchaea group</taxon>
        <taxon>Methanomicrobia</taxon>
        <taxon>Methanomicrobiales</taxon>
        <taxon>Methanocorpusculaceae</taxon>
        <taxon>Methanocorpusculum</taxon>
    </lineage>
</organism>
<name>MFNA_METLZ</name>
<comment type="function">
    <text evidence="1">Catalyzes the decarboxylation of L-tyrosine to produce tyramine for methanofuran biosynthesis. Can also catalyze the decarboxylation of L-aspartate to produce beta-alanine for coenzyme A (CoA) biosynthesis.</text>
</comment>
<comment type="catalytic activity">
    <reaction evidence="1">
        <text>L-tyrosine + H(+) = tyramine + CO2</text>
        <dbReference type="Rhea" id="RHEA:14345"/>
        <dbReference type="ChEBI" id="CHEBI:15378"/>
        <dbReference type="ChEBI" id="CHEBI:16526"/>
        <dbReference type="ChEBI" id="CHEBI:58315"/>
        <dbReference type="ChEBI" id="CHEBI:327995"/>
        <dbReference type="EC" id="4.1.1.25"/>
    </reaction>
</comment>
<comment type="catalytic activity">
    <reaction evidence="1">
        <text>L-aspartate + H(+) = beta-alanine + CO2</text>
        <dbReference type="Rhea" id="RHEA:19497"/>
        <dbReference type="ChEBI" id="CHEBI:15378"/>
        <dbReference type="ChEBI" id="CHEBI:16526"/>
        <dbReference type="ChEBI" id="CHEBI:29991"/>
        <dbReference type="ChEBI" id="CHEBI:57966"/>
        <dbReference type="EC" id="4.1.1.11"/>
    </reaction>
</comment>
<comment type="cofactor">
    <cofactor evidence="1">
        <name>pyridoxal 5'-phosphate</name>
        <dbReference type="ChEBI" id="CHEBI:597326"/>
    </cofactor>
</comment>
<comment type="pathway">
    <text evidence="1">Cofactor biosynthesis; methanofuran biosynthesis.</text>
</comment>
<comment type="pathway">
    <text evidence="1">Cofactor biosynthesis; coenzyme A biosynthesis.</text>
</comment>
<comment type="similarity">
    <text evidence="1">Belongs to the group II decarboxylase family. MfnA subfamily.</text>
</comment>
<sequence length="365" mass="39705">MEEKGCKREEVISLLSAYRAEDLHHDHILSSMCTIPHEMAVFVHGMFSATNLGDPGLFPGTTKIEDRLVHSLGELMHHPGAGGYATSGGTESNLQAIRIAKKLKPEIKNPNIVVPASAHFSFDKTCDILGLEMRTVPYGKNYTVDCDKMAEMVDKNTISVSAIAGTTEYGMIDDVERIAKIALENDLFFHVDAAFGGMVIPFLPNPAPFDFEVPGVSSISLDPHKMGMSTIPCGCLLLREPEQFGTLNVDTPYLTVKKECTLAGTRPGADVAGAYAVIKLLGREGFRAVVAGCMENTRRLIEGMEAFGYTRAVDPVMNVATFEAGPVPKGWIVSHTRAGHLRFVVMPHVTRDVIENFLADVAKIN</sequence>
<protein>
    <recommendedName>
        <fullName evidence="1">Probable L-tyrosine/L-aspartate decarboxylase</fullName>
        <shortName evidence="1">TDC/ADC</shortName>
        <ecNumber evidence="1">4.1.1.11</ecNumber>
        <ecNumber evidence="1">4.1.1.25</ecNumber>
    </recommendedName>
</protein>
<dbReference type="EC" id="4.1.1.11" evidence="1"/>
<dbReference type="EC" id="4.1.1.25" evidence="1"/>
<dbReference type="EMBL" id="CP000559">
    <property type="protein sequence ID" value="ABN07709.1"/>
    <property type="molecule type" value="Genomic_DNA"/>
</dbReference>
<dbReference type="RefSeq" id="WP_011833912.1">
    <property type="nucleotide sequence ID" value="NC_008942.1"/>
</dbReference>
<dbReference type="SMR" id="A2STQ3"/>
<dbReference type="STRING" id="410358.Mlab_1545"/>
<dbReference type="GeneID" id="4795948"/>
<dbReference type="KEGG" id="mla:Mlab_1545"/>
<dbReference type="eggNOG" id="arCOG00027">
    <property type="taxonomic scope" value="Archaea"/>
</dbReference>
<dbReference type="HOGENOM" id="CLU_028929_2_1_2"/>
<dbReference type="OrthoDB" id="56891at2157"/>
<dbReference type="UniPathway" id="UPA00080"/>
<dbReference type="UniPathway" id="UPA00241"/>
<dbReference type="Proteomes" id="UP000000365">
    <property type="component" value="Chromosome"/>
</dbReference>
<dbReference type="GO" id="GO:0004068">
    <property type="term" value="F:aspartate 1-decarboxylase activity"/>
    <property type="evidence" value="ECO:0007669"/>
    <property type="project" value="UniProtKB-UniRule"/>
</dbReference>
<dbReference type="GO" id="GO:0030170">
    <property type="term" value="F:pyridoxal phosphate binding"/>
    <property type="evidence" value="ECO:0007669"/>
    <property type="project" value="UniProtKB-UniRule"/>
</dbReference>
<dbReference type="GO" id="GO:0004837">
    <property type="term" value="F:tyrosine decarboxylase activity"/>
    <property type="evidence" value="ECO:0007669"/>
    <property type="project" value="UniProtKB-UniRule"/>
</dbReference>
<dbReference type="GO" id="GO:0019752">
    <property type="term" value="P:carboxylic acid metabolic process"/>
    <property type="evidence" value="ECO:0007669"/>
    <property type="project" value="InterPro"/>
</dbReference>
<dbReference type="GO" id="GO:0015937">
    <property type="term" value="P:coenzyme A biosynthetic process"/>
    <property type="evidence" value="ECO:0007669"/>
    <property type="project" value="UniProtKB-UniRule"/>
</dbReference>
<dbReference type="GO" id="GO:2001120">
    <property type="term" value="P:methanofuran biosynthetic process"/>
    <property type="evidence" value="ECO:0007669"/>
    <property type="project" value="UniProtKB-UniRule"/>
</dbReference>
<dbReference type="Gene3D" id="3.90.1150.10">
    <property type="entry name" value="Aspartate Aminotransferase, domain 1"/>
    <property type="match status" value="1"/>
</dbReference>
<dbReference type="Gene3D" id="3.40.640.10">
    <property type="entry name" value="Type I PLP-dependent aspartate aminotransferase-like (Major domain)"/>
    <property type="match status" value="1"/>
</dbReference>
<dbReference type="HAMAP" id="MF_01610">
    <property type="entry name" value="MfnA_decarbox"/>
    <property type="match status" value="1"/>
</dbReference>
<dbReference type="InterPro" id="IPR050477">
    <property type="entry name" value="GrpII_AminoAcid_Decarb"/>
</dbReference>
<dbReference type="InterPro" id="IPR020931">
    <property type="entry name" value="MfnA"/>
</dbReference>
<dbReference type="InterPro" id="IPR002129">
    <property type="entry name" value="PyrdxlP-dep_de-COase"/>
</dbReference>
<dbReference type="InterPro" id="IPR015424">
    <property type="entry name" value="PyrdxlP-dep_Trfase"/>
</dbReference>
<dbReference type="InterPro" id="IPR015421">
    <property type="entry name" value="PyrdxlP-dep_Trfase_major"/>
</dbReference>
<dbReference type="InterPro" id="IPR015422">
    <property type="entry name" value="PyrdxlP-dep_Trfase_small"/>
</dbReference>
<dbReference type="InterPro" id="IPR021115">
    <property type="entry name" value="Pyridoxal-P_BS"/>
</dbReference>
<dbReference type="NCBIfam" id="TIGR03812">
    <property type="entry name" value="tyr_de_CO2_Arch"/>
    <property type="match status" value="1"/>
</dbReference>
<dbReference type="PANTHER" id="PTHR42735">
    <property type="match status" value="1"/>
</dbReference>
<dbReference type="PANTHER" id="PTHR42735:SF6">
    <property type="entry name" value="SPHINGOSINE-1-PHOSPHATE LYASE 1"/>
    <property type="match status" value="1"/>
</dbReference>
<dbReference type="Pfam" id="PF00282">
    <property type="entry name" value="Pyridoxal_deC"/>
    <property type="match status" value="1"/>
</dbReference>
<dbReference type="SUPFAM" id="SSF53383">
    <property type="entry name" value="PLP-dependent transferases"/>
    <property type="match status" value="1"/>
</dbReference>
<dbReference type="PROSITE" id="PS00392">
    <property type="entry name" value="DDC_GAD_HDC_YDC"/>
    <property type="match status" value="1"/>
</dbReference>
<reference key="1">
    <citation type="journal article" date="2009" name="Stand. Genomic Sci.">
        <title>Complete genome sequence of Methanocorpusculum labreanum type strain Z.</title>
        <authorList>
            <person name="Anderson I.J."/>
            <person name="Sieprawska-Lupa M."/>
            <person name="Goltsman E."/>
            <person name="Lapidus A."/>
            <person name="Copeland A."/>
            <person name="Glavina Del Rio T."/>
            <person name="Tice H."/>
            <person name="Dalin E."/>
            <person name="Barry K."/>
            <person name="Pitluck S."/>
            <person name="Hauser L."/>
            <person name="Land M."/>
            <person name="Lucas S."/>
            <person name="Richardson P."/>
            <person name="Whitman W.B."/>
            <person name="Kyrpides N.C."/>
        </authorList>
    </citation>
    <scope>NUCLEOTIDE SEQUENCE [LARGE SCALE GENOMIC DNA]</scope>
    <source>
        <strain>ATCC 43576 / DSM 4855 / Z</strain>
    </source>
</reference>
<gene>
    <name evidence="1" type="primary">mfnA</name>
    <name type="ordered locus">Mlab_1545</name>
</gene>
<accession>A2STQ3</accession>
<feature type="chain" id="PRO_0000293184" description="Probable L-tyrosine/L-aspartate decarboxylase">
    <location>
        <begin position="1"/>
        <end position="365"/>
    </location>
</feature>
<feature type="modified residue" description="N6-(pyridoxal phosphate)lysine" evidence="1">
    <location>
        <position position="225"/>
    </location>
</feature>